<comment type="function">
    <text evidence="1">Converts heme B (protoheme IX) to heme O by substitution of the vinyl group on carbon 2 of heme B porphyrin ring with a hydroxyethyl farnesyl side group.</text>
</comment>
<comment type="catalytic activity">
    <reaction evidence="1">
        <text>heme b + (2E,6E)-farnesyl diphosphate + H2O = Fe(II)-heme o + diphosphate</text>
        <dbReference type="Rhea" id="RHEA:28070"/>
        <dbReference type="ChEBI" id="CHEBI:15377"/>
        <dbReference type="ChEBI" id="CHEBI:33019"/>
        <dbReference type="ChEBI" id="CHEBI:60344"/>
        <dbReference type="ChEBI" id="CHEBI:60530"/>
        <dbReference type="ChEBI" id="CHEBI:175763"/>
        <dbReference type="EC" id="2.5.1.141"/>
    </reaction>
</comment>
<comment type="pathway">
    <text evidence="1">Porphyrin-containing compound metabolism; heme O biosynthesis; heme O from protoheme: step 1/1.</text>
</comment>
<comment type="subcellular location">
    <subcellularLocation>
        <location evidence="1">Cell inner membrane</location>
        <topology evidence="1">Multi-pass membrane protein</topology>
    </subcellularLocation>
</comment>
<comment type="miscellaneous">
    <text evidence="1">Carbon 2 of the heme B porphyrin ring is defined according to the Fischer nomenclature.</text>
</comment>
<comment type="similarity">
    <text evidence="1">Belongs to the UbiA prenyltransferase family. Protoheme IX farnesyltransferase subfamily.</text>
</comment>
<dbReference type="EC" id="2.5.1.141" evidence="1"/>
<dbReference type="EMBL" id="CP000269">
    <property type="protein sequence ID" value="ABR88263.1"/>
    <property type="molecule type" value="Genomic_DNA"/>
</dbReference>
<dbReference type="RefSeq" id="WP_012080987.1">
    <property type="nucleotide sequence ID" value="NC_009659.1"/>
</dbReference>
<dbReference type="SMR" id="A6T2T7"/>
<dbReference type="STRING" id="375286.mma_3144"/>
<dbReference type="KEGG" id="mms:mma_3144"/>
<dbReference type="eggNOG" id="COG0109">
    <property type="taxonomic scope" value="Bacteria"/>
</dbReference>
<dbReference type="HOGENOM" id="CLU_029631_0_2_4"/>
<dbReference type="OrthoDB" id="9814417at2"/>
<dbReference type="UniPathway" id="UPA00834">
    <property type="reaction ID" value="UER00712"/>
</dbReference>
<dbReference type="Proteomes" id="UP000006388">
    <property type="component" value="Chromosome"/>
</dbReference>
<dbReference type="GO" id="GO:0005886">
    <property type="term" value="C:plasma membrane"/>
    <property type="evidence" value="ECO:0007669"/>
    <property type="project" value="UniProtKB-SubCell"/>
</dbReference>
<dbReference type="GO" id="GO:0008495">
    <property type="term" value="F:protoheme IX farnesyltransferase activity"/>
    <property type="evidence" value="ECO:0007669"/>
    <property type="project" value="UniProtKB-UniRule"/>
</dbReference>
<dbReference type="GO" id="GO:0048034">
    <property type="term" value="P:heme O biosynthetic process"/>
    <property type="evidence" value="ECO:0007669"/>
    <property type="project" value="UniProtKB-UniRule"/>
</dbReference>
<dbReference type="CDD" id="cd13957">
    <property type="entry name" value="PT_UbiA_Cox10"/>
    <property type="match status" value="1"/>
</dbReference>
<dbReference type="Gene3D" id="1.10.357.140">
    <property type="entry name" value="UbiA prenyltransferase"/>
    <property type="match status" value="1"/>
</dbReference>
<dbReference type="HAMAP" id="MF_00154">
    <property type="entry name" value="CyoE_CtaB"/>
    <property type="match status" value="1"/>
</dbReference>
<dbReference type="InterPro" id="IPR006369">
    <property type="entry name" value="Protohaem_IX_farnesylTrfase"/>
</dbReference>
<dbReference type="InterPro" id="IPR000537">
    <property type="entry name" value="UbiA_prenyltransferase"/>
</dbReference>
<dbReference type="InterPro" id="IPR030470">
    <property type="entry name" value="UbiA_prenylTrfase_CS"/>
</dbReference>
<dbReference type="InterPro" id="IPR044878">
    <property type="entry name" value="UbiA_sf"/>
</dbReference>
<dbReference type="NCBIfam" id="TIGR01473">
    <property type="entry name" value="cyoE_ctaB"/>
    <property type="match status" value="1"/>
</dbReference>
<dbReference type="NCBIfam" id="NF003349">
    <property type="entry name" value="PRK04375.1-2"/>
    <property type="match status" value="1"/>
</dbReference>
<dbReference type="PANTHER" id="PTHR43448:SF7">
    <property type="entry name" value="4-HYDROXYBENZOATE SOLANESYLTRANSFERASE"/>
    <property type="match status" value="1"/>
</dbReference>
<dbReference type="PANTHER" id="PTHR43448">
    <property type="entry name" value="PROTOHEME IX FARNESYLTRANSFERASE, MITOCHONDRIAL"/>
    <property type="match status" value="1"/>
</dbReference>
<dbReference type="Pfam" id="PF01040">
    <property type="entry name" value="UbiA"/>
    <property type="match status" value="1"/>
</dbReference>
<dbReference type="PROSITE" id="PS00943">
    <property type="entry name" value="UBIA"/>
    <property type="match status" value="1"/>
</dbReference>
<protein>
    <recommendedName>
        <fullName evidence="1">Protoheme IX farnesyltransferase</fullName>
        <ecNumber evidence="1">2.5.1.141</ecNumber>
    </recommendedName>
    <alternativeName>
        <fullName evidence="1">Heme B farnesyltransferase</fullName>
    </alternativeName>
    <alternativeName>
        <fullName evidence="1">Heme O synthase</fullName>
    </alternativeName>
</protein>
<name>COXX_JANMA</name>
<reference key="1">
    <citation type="journal article" date="2007" name="PLoS Genet.">
        <title>Genome analysis of Minibacterium massiliensis highlights the convergent evolution of water-living bacteria.</title>
        <authorList>
            <person name="Audic S."/>
            <person name="Robert C."/>
            <person name="Campagna B."/>
            <person name="Parinello H."/>
            <person name="Claverie J.-M."/>
            <person name="Raoult D."/>
            <person name="Drancourt M."/>
        </authorList>
    </citation>
    <scope>NUCLEOTIDE SEQUENCE [LARGE SCALE GENOMIC DNA]</scope>
    <source>
        <strain>Marseille</strain>
    </source>
</reference>
<sequence>MTTLTASPNRIAQYWALTKPRVTQLAVFCAVIGMFLATPELPSWKIVVAATIGIWLLAGAAFAINCLVEREIDSRMARTARRPMARGEITVPQTLVFSGLIGGAGMWVLYNFVNPLTMWLTFATFVGYAVIYTIILKPATPQNIVIGGLSGAMPPALGWAAVANDLPMQAWILVLIIFIWTPPHFWALALYRRDEYAKSGLPMLPVTHGTEFTQFHIWLYTIALVATTMLPFAVGMSGLIYLVSVAILDIIFVWYAWQVYRHYTDMIARKMFAYSIIYLSLLFAALLVDHYLRF</sequence>
<evidence type="ECO:0000255" key="1">
    <source>
        <dbReference type="HAMAP-Rule" id="MF_00154"/>
    </source>
</evidence>
<organism>
    <name type="scientific">Janthinobacterium sp. (strain Marseille)</name>
    <name type="common">Minibacterium massiliensis</name>
    <dbReference type="NCBI Taxonomy" id="375286"/>
    <lineage>
        <taxon>Bacteria</taxon>
        <taxon>Pseudomonadati</taxon>
        <taxon>Pseudomonadota</taxon>
        <taxon>Betaproteobacteria</taxon>
        <taxon>Burkholderiales</taxon>
        <taxon>Oxalobacteraceae</taxon>
        <taxon>Janthinobacterium</taxon>
    </lineage>
</organism>
<keyword id="KW-0997">Cell inner membrane</keyword>
<keyword id="KW-1003">Cell membrane</keyword>
<keyword id="KW-0350">Heme biosynthesis</keyword>
<keyword id="KW-0472">Membrane</keyword>
<keyword id="KW-0808">Transferase</keyword>
<keyword id="KW-0812">Transmembrane</keyword>
<keyword id="KW-1133">Transmembrane helix</keyword>
<accession>A6T2T7</accession>
<proteinExistence type="inferred from homology"/>
<gene>
    <name evidence="1" type="primary">ctaB</name>
    <name type="ordered locus">mma_3144</name>
</gene>
<feature type="chain" id="PRO_0000327065" description="Protoheme IX farnesyltransferase">
    <location>
        <begin position="1"/>
        <end position="294"/>
    </location>
</feature>
<feature type="transmembrane region" description="Helical" evidence="1">
    <location>
        <begin position="22"/>
        <end position="42"/>
    </location>
</feature>
<feature type="transmembrane region" description="Helical" evidence="1">
    <location>
        <begin position="46"/>
        <end position="66"/>
    </location>
</feature>
<feature type="transmembrane region" description="Helical" evidence="1">
    <location>
        <begin position="89"/>
        <end position="109"/>
    </location>
</feature>
<feature type="transmembrane region" description="Helical" evidence="1">
    <location>
        <begin position="116"/>
        <end position="136"/>
    </location>
</feature>
<feature type="transmembrane region" description="Helical" evidence="1">
    <location>
        <begin position="143"/>
        <end position="163"/>
    </location>
</feature>
<feature type="transmembrane region" description="Helical" evidence="1">
    <location>
        <begin position="170"/>
        <end position="190"/>
    </location>
</feature>
<feature type="transmembrane region" description="Helical" evidence="1">
    <location>
        <begin position="212"/>
        <end position="232"/>
    </location>
</feature>
<feature type="transmembrane region" description="Helical" evidence="1">
    <location>
        <begin position="234"/>
        <end position="254"/>
    </location>
</feature>
<feature type="transmembrane region" description="Helical" evidence="1">
    <location>
        <begin position="272"/>
        <end position="292"/>
    </location>
</feature>